<proteinExistence type="inferred from homology"/>
<organism>
    <name type="scientific">Bifidobacterium longum (strain NCC 2705)</name>
    <dbReference type="NCBI Taxonomy" id="206672"/>
    <lineage>
        <taxon>Bacteria</taxon>
        <taxon>Bacillati</taxon>
        <taxon>Actinomycetota</taxon>
        <taxon>Actinomycetes</taxon>
        <taxon>Bifidobacteriales</taxon>
        <taxon>Bifidobacteriaceae</taxon>
        <taxon>Bifidobacterium</taxon>
    </lineage>
</organism>
<protein>
    <recommendedName>
        <fullName evidence="1">Elongation factor 4</fullName>
        <shortName evidence="1">EF-4</shortName>
        <ecNumber evidence="1">3.6.5.n1</ecNumber>
    </recommendedName>
    <alternativeName>
        <fullName evidence="1">Ribosomal back-translocase LepA</fullName>
    </alternativeName>
</protein>
<dbReference type="EC" id="3.6.5.n1" evidence="1"/>
<dbReference type="EMBL" id="AE014295">
    <property type="protein sequence ID" value="AAN24661.1"/>
    <property type="molecule type" value="Genomic_DNA"/>
</dbReference>
<dbReference type="RefSeq" id="NP_696025.1">
    <property type="nucleotide sequence ID" value="NC_004307.2"/>
</dbReference>
<dbReference type="RefSeq" id="WP_007053360.1">
    <property type="nucleotide sequence ID" value="NC_004307.2"/>
</dbReference>
<dbReference type="SMR" id="Q8G603"/>
<dbReference type="STRING" id="206672.BL0848"/>
<dbReference type="EnsemblBacteria" id="AAN24661">
    <property type="protein sequence ID" value="AAN24661"/>
    <property type="gene ID" value="BL0848"/>
</dbReference>
<dbReference type="GeneID" id="69578012"/>
<dbReference type="KEGG" id="blo:BL0848"/>
<dbReference type="PATRIC" id="fig|206672.9.peg.542"/>
<dbReference type="HOGENOM" id="CLU_009995_3_3_11"/>
<dbReference type="OrthoDB" id="9801472at2"/>
<dbReference type="PhylomeDB" id="Q8G603"/>
<dbReference type="Proteomes" id="UP000000439">
    <property type="component" value="Chromosome"/>
</dbReference>
<dbReference type="GO" id="GO:0005886">
    <property type="term" value="C:plasma membrane"/>
    <property type="evidence" value="ECO:0007669"/>
    <property type="project" value="UniProtKB-SubCell"/>
</dbReference>
<dbReference type="GO" id="GO:0005525">
    <property type="term" value="F:GTP binding"/>
    <property type="evidence" value="ECO:0007669"/>
    <property type="project" value="UniProtKB-UniRule"/>
</dbReference>
<dbReference type="GO" id="GO:0003924">
    <property type="term" value="F:GTPase activity"/>
    <property type="evidence" value="ECO:0007669"/>
    <property type="project" value="UniProtKB-UniRule"/>
</dbReference>
<dbReference type="GO" id="GO:0043022">
    <property type="term" value="F:ribosome binding"/>
    <property type="evidence" value="ECO:0007669"/>
    <property type="project" value="UniProtKB-UniRule"/>
</dbReference>
<dbReference type="GO" id="GO:0003746">
    <property type="term" value="F:translation elongation factor activity"/>
    <property type="evidence" value="ECO:0007669"/>
    <property type="project" value="UniProtKB-UniRule"/>
</dbReference>
<dbReference type="GO" id="GO:0045727">
    <property type="term" value="P:positive regulation of translation"/>
    <property type="evidence" value="ECO:0007669"/>
    <property type="project" value="UniProtKB-UniRule"/>
</dbReference>
<dbReference type="CDD" id="cd03699">
    <property type="entry name" value="EF4_II"/>
    <property type="match status" value="1"/>
</dbReference>
<dbReference type="CDD" id="cd16260">
    <property type="entry name" value="EF4_III"/>
    <property type="match status" value="1"/>
</dbReference>
<dbReference type="CDD" id="cd01890">
    <property type="entry name" value="LepA"/>
    <property type="match status" value="1"/>
</dbReference>
<dbReference type="CDD" id="cd03709">
    <property type="entry name" value="lepA_C"/>
    <property type="match status" value="1"/>
</dbReference>
<dbReference type="FunFam" id="3.40.50.300:FF:000078">
    <property type="entry name" value="Elongation factor 4"/>
    <property type="match status" value="1"/>
</dbReference>
<dbReference type="FunFam" id="2.40.30.10:FF:000015">
    <property type="entry name" value="Translation factor GUF1, mitochondrial"/>
    <property type="match status" value="1"/>
</dbReference>
<dbReference type="FunFam" id="3.30.70.240:FF:000007">
    <property type="entry name" value="Translation factor GUF1, mitochondrial"/>
    <property type="match status" value="1"/>
</dbReference>
<dbReference type="FunFam" id="3.30.70.2570:FF:000001">
    <property type="entry name" value="Translation factor GUF1, mitochondrial"/>
    <property type="match status" value="1"/>
</dbReference>
<dbReference type="FunFam" id="3.30.70.870:FF:000004">
    <property type="entry name" value="Translation factor GUF1, mitochondrial"/>
    <property type="match status" value="1"/>
</dbReference>
<dbReference type="Gene3D" id="3.30.70.240">
    <property type="match status" value="1"/>
</dbReference>
<dbReference type="Gene3D" id="3.30.70.2570">
    <property type="entry name" value="Elongation factor 4, C-terminal domain"/>
    <property type="match status" value="1"/>
</dbReference>
<dbReference type="Gene3D" id="3.30.70.870">
    <property type="entry name" value="Elongation Factor G (Translational Gtpase), domain 3"/>
    <property type="match status" value="1"/>
</dbReference>
<dbReference type="Gene3D" id="3.40.50.300">
    <property type="entry name" value="P-loop containing nucleotide triphosphate hydrolases"/>
    <property type="match status" value="1"/>
</dbReference>
<dbReference type="Gene3D" id="2.40.30.10">
    <property type="entry name" value="Translation factors"/>
    <property type="match status" value="1"/>
</dbReference>
<dbReference type="HAMAP" id="MF_00071">
    <property type="entry name" value="LepA"/>
    <property type="match status" value="1"/>
</dbReference>
<dbReference type="InterPro" id="IPR006297">
    <property type="entry name" value="EF-4"/>
</dbReference>
<dbReference type="InterPro" id="IPR035647">
    <property type="entry name" value="EFG_III/V"/>
</dbReference>
<dbReference type="InterPro" id="IPR000640">
    <property type="entry name" value="EFG_V-like"/>
</dbReference>
<dbReference type="InterPro" id="IPR004161">
    <property type="entry name" value="EFTu-like_2"/>
</dbReference>
<dbReference type="InterPro" id="IPR031157">
    <property type="entry name" value="G_TR_CS"/>
</dbReference>
<dbReference type="InterPro" id="IPR038363">
    <property type="entry name" value="LepA_C_sf"/>
</dbReference>
<dbReference type="InterPro" id="IPR013842">
    <property type="entry name" value="LepA_CTD"/>
</dbReference>
<dbReference type="InterPro" id="IPR035654">
    <property type="entry name" value="LepA_IV"/>
</dbReference>
<dbReference type="InterPro" id="IPR027417">
    <property type="entry name" value="P-loop_NTPase"/>
</dbReference>
<dbReference type="InterPro" id="IPR005225">
    <property type="entry name" value="Small_GTP-bd"/>
</dbReference>
<dbReference type="InterPro" id="IPR000795">
    <property type="entry name" value="T_Tr_GTP-bd_dom"/>
</dbReference>
<dbReference type="InterPro" id="IPR009000">
    <property type="entry name" value="Transl_B-barrel_sf"/>
</dbReference>
<dbReference type="NCBIfam" id="TIGR01393">
    <property type="entry name" value="lepA"/>
    <property type="match status" value="1"/>
</dbReference>
<dbReference type="NCBIfam" id="TIGR00231">
    <property type="entry name" value="small_GTP"/>
    <property type="match status" value="1"/>
</dbReference>
<dbReference type="PANTHER" id="PTHR43512:SF4">
    <property type="entry name" value="TRANSLATION FACTOR GUF1 HOMOLOG, CHLOROPLASTIC"/>
    <property type="match status" value="1"/>
</dbReference>
<dbReference type="PANTHER" id="PTHR43512">
    <property type="entry name" value="TRANSLATION FACTOR GUF1-RELATED"/>
    <property type="match status" value="1"/>
</dbReference>
<dbReference type="Pfam" id="PF00679">
    <property type="entry name" value="EFG_C"/>
    <property type="match status" value="1"/>
</dbReference>
<dbReference type="Pfam" id="PF00009">
    <property type="entry name" value="GTP_EFTU"/>
    <property type="match status" value="1"/>
</dbReference>
<dbReference type="Pfam" id="PF03144">
    <property type="entry name" value="GTP_EFTU_D2"/>
    <property type="match status" value="1"/>
</dbReference>
<dbReference type="Pfam" id="PF06421">
    <property type="entry name" value="LepA_C"/>
    <property type="match status" value="1"/>
</dbReference>
<dbReference type="PRINTS" id="PR00315">
    <property type="entry name" value="ELONGATNFCT"/>
</dbReference>
<dbReference type="SMART" id="SM00838">
    <property type="entry name" value="EFG_C"/>
    <property type="match status" value="1"/>
</dbReference>
<dbReference type="SUPFAM" id="SSF54980">
    <property type="entry name" value="EF-G C-terminal domain-like"/>
    <property type="match status" value="2"/>
</dbReference>
<dbReference type="SUPFAM" id="SSF52540">
    <property type="entry name" value="P-loop containing nucleoside triphosphate hydrolases"/>
    <property type="match status" value="1"/>
</dbReference>
<dbReference type="SUPFAM" id="SSF50447">
    <property type="entry name" value="Translation proteins"/>
    <property type="match status" value="1"/>
</dbReference>
<dbReference type="PROSITE" id="PS00301">
    <property type="entry name" value="G_TR_1"/>
    <property type="match status" value="1"/>
</dbReference>
<dbReference type="PROSITE" id="PS51722">
    <property type="entry name" value="G_TR_2"/>
    <property type="match status" value="1"/>
</dbReference>
<accession>Q8G603</accession>
<comment type="function">
    <text evidence="1">Required for accurate and efficient protein synthesis under certain stress conditions. May act as a fidelity factor of the translation reaction, by catalyzing a one-codon backward translocation of tRNAs on improperly translocated ribosomes. Back-translocation proceeds from a post-translocation (POST) complex to a pre-translocation (PRE) complex, thus giving elongation factor G a second chance to translocate the tRNAs correctly. Binds to ribosomes in a GTP-dependent manner.</text>
</comment>
<comment type="catalytic activity">
    <reaction evidence="1">
        <text>GTP + H2O = GDP + phosphate + H(+)</text>
        <dbReference type="Rhea" id="RHEA:19669"/>
        <dbReference type="ChEBI" id="CHEBI:15377"/>
        <dbReference type="ChEBI" id="CHEBI:15378"/>
        <dbReference type="ChEBI" id="CHEBI:37565"/>
        <dbReference type="ChEBI" id="CHEBI:43474"/>
        <dbReference type="ChEBI" id="CHEBI:58189"/>
        <dbReference type="EC" id="3.6.5.n1"/>
    </reaction>
</comment>
<comment type="subcellular location">
    <subcellularLocation>
        <location evidence="1">Cell membrane</location>
        <topology evidence="1">Peripheral membrane protein</topology>
        <orientation evidence="1">Cytoplasmic side</orientation>
    </subcellularLocation>
</comment>
<comment type="similarity">
    <text evidence="1">Belongs to the TRAFAC class translation factor GTPase superfamily. Classic translation factor GTPase family. LepA subfamily.</text>
</comment>
<gene>
    <name evidence="1" type="primary">lepA</name>
    <name type="ordered locus">BL0848</name>
</gene>
<reference key="1">
    <citation type="journal article" date="2002" name="Proc. Natl. Acad. Sci. U.S.A.">
        <title>The genome sequence of Bifidobacterium longum reflects its adaptation to the human gastrointestinal tract.</title>
        <authorList>
            <person name="Schell M.A."/>
            <person name="Karmirantzou M."/>
            <person name="Snel B."/>
            <person name="Vilanova D."/>
            <person name="Berger B."/>
            <person name="Pessi G."/>
            <person name="Zwahlen M.-C."/>
            <person name="Desiere F."/>
            <person name="Bork P."/>
            <person name="Delley M."/>
            <person name="Pridmore R.D."/>
            <person name="Arigoni F."/>
        </authorList>
    </citation>
    <scope>NUCLEOTIDE SEQUENCE [LARGE SCALE GENOMIC DNA]</scope>
    <source>
        <strain>NCC 2705</strain>
    </source>
</reference>
<feature type="chain" id="PRO_0000176237" description="Elongation factor 4">
    <location>
        <begin position="1"/>
        <end position="626"/>
    </location>
</feature>
<feature type="domain" description="tr-type G">
    <location>
        <begin position="14"/>
        <end position="195"/>
    </location>
</feature>
<feature type="region of interest" description="Disordered" evidence="2">
    <location>
        <begin position="603"/>
        <end position="626"/>
    </location>
</feature>
<feature type="compositionally biased region" description="Basic and acidic residues" evidence="2">
    <location>
        <begin position="609"/>
        <end position="626"/>
    </location>
</feature>
<feature type="binding site" evidence="1">
    <location>
        <begin position="26"/>
        <end position="31"/>
    </location>
    <ligand>
        <name>GTP</name>
        <dbReference type="ChEBI" id="CHEBI:37565"/>
    </ligand>
</feature>
<feature type="binding site" evidence="1">
    <location>
        <begin position="142"/>
        <end position="145"/>
    </location>
    <ligand>
        <name>GTP</name>
        <dbReference type="ChEBI" id="CHEBI:37565"/>
    </ligand>
</feature>
<name>LEPA_BIFLO</name>
<sequence length="626" mass="69258">MVVQHNQPGSTDQSVIRNFCIIAHIDHGKSTVADRILQLSGIVPEREMRDRFLDRMDIEQERGITIKSQAVRVPWTFDGTEYTLGMIDTPGHVDFTYEVSRALAACEGAVLLVDATQGIEAQTLSNLYMAIDHDLAIIPVLNKIDLPSAEPDKHAEEIAGLIGCEPSDVLRVSGKTGEGVADLLDQIVMDVPAPHGDPDAPARALIFDSVYDSYRGIVTYIRMEDGELHDREKVHMMGIGMTHDPIEIGVISPDMTRTKALGAGEVGYIITGAKDVSQSKVGDTLTSAVRPAAEPLPGYRDPKPMVYAGLFPIDNAQFPELRDALDKLKLNDAALIYTPETSVALGFGFRCGFLGLLHMEIVNERLSREFGLDLIQTAPNVTYDVTAEDGSQHHVTNPSEFPDGKIKKIVEPMVAADIITPKEFIGAVMDLCQDHRGIMGTMEYISTDRVEMHYRIPLAEIVFDFFDQLKSRTKGYASLDYHEDGEQSADLVKVDILIQGEKVDAFSAIVHRDKAYSYGVMMTKKLRSLIPRQQFEIPIQAAIGSRIIARENIRALRKDVLAKCYGGDITRKRKLLEKQKAGKKRMKMLGHVEVPQEAFIAALSTGEDSNDRDTKDKIRAAQKTEG</sequence>
<keyword id="KW-1003">Cell membrane</keyword>
<keyword id="KW-0342">GTP-binding</keyword>
<keyword id="KW-0378">Hydrolase</keyword>
<keyword id="KW-0472">Membrane</keyword>
<keyword id="KW-0547">Nucleotide-binding</keyword>
<keyword id="KW-0648">Protein biosynthesis</keyword>
<keyword id="KW-1185">Reference proteome</keyword>
<evidence type="ECO:0000255" key="1">
    <source>
        <dbReference type="HAMAP-Rule" id="MF_00071"/>
    </source>
</evidence>
<evidence type="ECO:0000256" key="2">
    <source>
        <dbReference type="SAM" id="MobiDB-lite"/>
    </source>
</evidence>